<comment type="function">
    <text evidence="1">Ubiquitin-binding protein that specifically recognizes and binds 'Lys-63'-linked ubiquitin. Does not bind 'Lys-48'-linked ubiquitin. Positively regulates the internalization of ligand-activated EGFR by binding to the Ub moiety of ubiquitinated EGFR at the cell membrane (By similarity).</text>
</comment>
<comment type="subunit">
    <text evidence="1">Interacts with EGFR (ubiquitinated); the interaction is direct and may regulate EGFR internalization.</text>
</comment>
<comment type="subcellular location">
    <subcellularLocation>
        <location>Cell membrane</location>
    </subcellularLocation>
    <subcellularLocation>
        <location>Late endosome</location>
    </subcellularLocation>
    <subcellularLocation>
        <location>Early endosome</location>
    </subcellularLocation>
    <text evidence="1">Interaction with EGFR may enhance association with the cell membrane.</text>
</comment>
<comment type="alternative products">
    <event type="alternative splicing"/>
    <isoform>
        <id>Q5F259-1</id>
        <name>1</name>
        <sequence type="displayed"/>
    </isoform>
    <isoform>
        <id>Q5F259-2</id>
        <name>2</name>
        <sequence type="described" ref="VSP_019405"/>
    </isoform>
</comment>
<protein>
    <recommendedName>
        <fullName>Ankyrin repeat domain-containing protein 13B</fullName>
    </recommendedName>
</protein>
<sequence length="626" mass="70374">MIPANASARKGPEGKYPLHYLVWHNRHRELEKEVRAGQVDIEQLDPRGRTPLHLATTLGHLECARVLLAHGADVGRENRSGWTVLQEAVSTRDLELVQLVLRYRDYQRVVKRLAGIPMLLEKLRKAQDFYVEMKWEFTSWVPLVSKICPSDTYKVWKSGQNLRVDTTLLGFDHMTWQRGNRSFVFRGQDTSAVVMEIDHDRRVVYMETLALAGQDRELLLAAAQPSEEQVLSRLTAPVVTTQLDTKNISFERNKTGILGWRSEKTEMVNGYEAKVYGASNVELITRTRTEHLSEQHKGKVKGCKTPLQSFLGIAEQHGGPQNGTLITQTLSQANPPAITAEEYFNPNFELGNRAMGRPMELTTKTQKFKAKLWLCEEHPLSLCEQVAPIIDLMAVSNALFAKLRDFITLRLPPGFPVKIEIPIFHILNARITFGNLNGCDEPVPSVRGSPGSETPSPGSDSSSVSSSSSTTSCRACEISPALFEAPRGYSVLGGQREAVPRDEDDDLLRFAIQQSLLEAGSEYDQVTIWEALTNSKPGTHPMSYEGRRQDRSAPPTPQRQPMPPAPVPSPRPSPGPGSSSHVFRSYDEQLRLAMELSAQEQEERRRRVRQEEEELERILRLSLTEQ</sequence>
<proteinExistence type="evidence at transcript level"/>
<gene>
    <name type="primary">Ankrd13b</name>
</gene>
<dbReference type="EMBL" id="AL607072">
    <property type="status" value="NOT_ANNOTATED_CDS"/>
    <property type="molecule type" value="Genomic_DNA"/>
</dbReference>
<dbReference type="EMBL" id="BC071189">
    <property type="protein sequence ID" value="AAH71189.1"/>
    <property type="status" value="ALT_SEQ"/>
    <property type="molecule type" value="mRNA"/>
</dbReference>
<dbReference type="EMBL" id="BC151158">
    <property type="protein sequence ID" value="AAI51159.1"/>
    <property type="molecule type" value="mRNA"/>
</dbReference>
<dbReference type="CCDS" id="CCDS36233.1">
    <molecule id="Q5F259-2"/>
</dbReference>
<dbReference type="CCDS" id="CCDS88195.1">
    <molecule id="Q5F259-1"/>
</dbReference>
<dbReference type="RefSeq" id="NP_001360811.1">
    <molecule id="Q5F259-1"/>
    <property type="nucleotide sequence ID" value="NM_001373882.1"/>
</dbReference>
<dbReference type="RefSeq" id="NP_766533.2">
    <molecule id="Q5F259-2"/>
    <property type="nucleotide sequence ID" value="NM_172945.2"/>
</dbReference>
<dbReference type="RefSeq" id="XP_006533458.1">
    <property type="nucleotide sequence ID" value="XM_006533395.2"/>
</dbReference>
<dbReference type="SMR" id="Q5F259"/>
<dbReference type="BioGRID" id="234498">
    <property type="interactions" value="1"/>
</dbReference>
<dbReference type="FunCoup" id="Q5F259">
    <property type="interactions" value="2684"/>
</dbReference>
<dbReference type="STRING" id="10090.ENSMUSP00000090568"/>
<dbReference type="iPTMnet" id="Q5F259"/>
<dbReference type="PhosphoSitePlus" id="Q5F259"/>
<dbReference type="PaxDb" id="10090-ENSMUSP00000090568"/>
<dbReference type="ProteomicsDB" id="296354">
    <molecule id="Q5F259-1"/>
</dbReference>
<dbReference type="ProteomicsDB" id="296355">
    <molecule id="Q5F259-2"/>
</dbReference>
<dbReference type="Antibodypedia" id="26768">
    <property type="antibodies" value="55 antibodies from 18 providers"/>
</dbReference>
<dbReference type="Ensembl" id="ENSMUST00000037593.14">
    <molecule id="Q5F259-1"/>
    <property type="protein sequence ID" value="ENSMUSP00000073584.7"/>
    <property type="gene ID" value="ENSMUSG00000037907.17"/>
</dbReference>
<dbReference type="Ensembl" id="ENSMUST00000092892.10">
    <molecule id="Q5F259-2"/>
    <property type="protein sequence ID" value="ENSMUSP00000090568.4"/>
    <property type="gene ID" value="ENSMUSG00000037907.17"/>
</dbReference>
<dbReference type="GeneID" id="268445"/>
<dbReference type="KEGG" id="mmu:268445"/>
<dbReference type="UCSC" id="uc007kgw.1">
    <molecule id="Q5F259-2"/>
    <property type="organism name" value="mouse"/>
</dbReference>
<dbReference type="UCSC" id="uc011xzw.1">
    <molecule id="Q5F259-1"/>
    <property type="organism name" value="mouse"/>
</dbReference>
<dbReference type="AGR" id="MGI:2144501"/>
<dbReference type="CTD" id="124930"/>
<dbReference type="MGI" id="MGI:2144501">
    <property type="gene designation" value="Ankrd13b"/>
</dbReference>
<dbReference type="VEuPathDB" id="HostDB:ENSMUSG00000037907"/>
<dbReference type="eggNOG" id="KOG0522">
    <property type="taxonomic scope" value="Eukaryota"/>
</dbReference>
<dbReference type="GeneTree" id="ENSGT00950000182928"/>
<dbReference type="HOGENOM" id="CLU_026137_2_0_1"/>
<dbReference type="InParanoid" id="Q5F259"/>
<dbReference type="OMA" id="NYPLHWL"/>
<dbReference type="PhylomeDB" id="Q5F259"/>
<dbReference type="TreeFam" id="TF314176"/>
<dbReference type="BioGRID-ORCS" id="268445">
    <property type="hits" value="3 hits in 82 CRISPR screens"/>
</dbReference>
<dbReference type="ChiTaRS" id="Ankrd13b">
    <property type="organism name" value="mouse"/>
</dbReference>
<dbReference type="PRO" id="PR:Q5F259"/>
<dbReference type="Proteomes" id="UP000000589">
    <property type="component" value="Chromosome 11"/>
</dbReference>
<dbReference type="RNAct" id="Q5F259">
    <property type="molecule type" value="protein"/>
</dbReference>
<dbReference type="Bgee" id="ENSMUSG00000037907">
    <property type="expression patterns" value="Expressed in embryonic brain and 196 other cell types or tissues"/>
</dbReference>
<dbReference type="ExpressionAtlas" id="Q5F259">
    <property type="expression patterns" value="baseline and differential"/>
</dbReference>
<dbReference type="GO" id="GO:0005737">
    <property type="term" value="C:cytoplasm"/>
    <property type="evidence" value="ECO:0000250"/>
    <property type="project" value="UniProtKB"/>
</dbReference>
<dbReference type="GO" id="GO:0005769">
    <property type="term" value="C:early endosome"/>
    <property type="evidence" value="ECO:0000250"/>
    <property type="project" value="UniProtKB"/>
</dbReference>
<dbReference type="GO" id="GO:0005770">
    <property type="term" value="C:late endosome"/>
    <property type="evidence" value="ECO:0000250"/>
    <property type="project" value="UniProtKB"/>
</dbReference>
<dbReference type="GO" id="GO:0048471">
    <property type="term" value="C:perinuclear region of cytoplasm"/>
    <property type="evidence" value="ECO:0000250"/>
    <property type="project" value="UniProtKB"/>
</dbReference>
<dbReference type="GO" id="GO:0005886">
    <property type="term" value="C:plasma membrane"/>
    <property type="evidence" value="ECO:0000250"/>
    <property type="project" value="UniProtKB"/>
</dbReference>
<dbReference type="GO" id="GO:0140036">
    <property type="term" value="F:ubiquitin-modified protein reader activity"/>
    <property type="evidence" value="ECO:0000250"/>
    <property type="project" value="UniProtKB"/>
</dbReference>
<dbReference type="GO" id="GO:0002091">
    <property type="term" value="P:negative regulation of receptor internalization"/>
    <property type="evidence" value="ECO:0000250"/>
    <property type="project" value="UniProtKB"/>
</dbReference>
<dbReference type="FunFam" id="1.25.40.20:FF:000057">
    <property type="entry name" value="Ankyrin repeat domain-containing protein 13B"/>
    <property type="match status" value="1"/>
</dbReference>
<dbReference type="Gene3D" id="1.25.40.20">
    <property type="entry name" value="Ankyrin repeat-containing domain"/>
    <property type="match status" value="1"/>
</dbReference>
<dbReference type="InterPro" id="IPR021832">
    <property type="entry name" value="ANKRD13"/>
</dbReference>
<dbReference type="InterPro" id="IPR055285">
    <property type="entry name" value="ANKRD13_C"/>
</dbReference>
<dbReference type="InterPro" id="IPR002110">
    <property type="entry name" value="Ankyrin_rpt"/>
</dbReference>
<dbReference type="InterPro" id="IPR036770">
    <property type="entry name" value="Ankyrin_rpt-contain_sf"/>
</dbReference>
<dbReference type="InterPro" id="IPR003903">
    <property type="entry name" value="UIM_dom"/>
</dbReference>
<dbReference type="PANTHER" id="PTHR12447">
    <property type="entry name" value="ANKYRIN REPEAT DOMAIN-CONTAINING PROTEIN 13"/>
    <property type="match status" value="1"/>
</dbReference>
<dbReference type="PANTHER" id="PTHR12447:SF3">
    <property type="entry name" value="ANKYRIN REPEAT DOMAIN-CONTAINING PROTEIN 13B"/>
    <property type="match status" value="1"/>
</dbReference>
<dbReference type="Pfam" id="PF12796">
    <property type="entry name" value="Ank_2"/>
    <property type="match status" value="1"/>
</dbReference>
<dbReference type="Pfam" id="PF11904">
    <property type="entry name" value="ANKRD13_C"/>
    <property type="match status" value="1"/>
</dbReference>
<dbReference type="SMART" id="SM00248">
    <property type="entry name" value="ANK"/>
    <property type="match status" value="3"/>
</dbReference>
<dbReference type="SMART" id="SM00726">
    <property type="entry name" value="UIM"/>
    <property type="match status" value="2"/>
</dbReference>
<dbReference type="SUPFAM" id="SSF48403">
    <property type="entry name" value="Ankyrin repeat"/>
    <property type="match status" value="1"/>
</dbReference>
<dbReference type="PROSITE" id="PS50297">
    <property type="entry name" value="ANK_REP_REGION"/>
    <property type="match status" value="1"/>
</dbReference>
<dbReference type="PROSITE" id="PS50088">
    <property type="entry name" value="ANK_REPEAT"/>
    <property type="match status" value="1"/>
</dbReference>
<dbReference type="PROSITE" id="PS50330">
    <property type="entry name" value="UIM"/>
    <property type="match status" value="1"/>
</dbReference>
<reference key="1">
    <citation type="journal article" date="2009" name="PLoS Biol.">
        <title>Lineage-specific biology revealed by a finished genome assembly of the mouse.</title>
        <authorList>
            <person name="Church D.M."/>
            <person name="Goodstadt L."/>
            <person name="Hillier L.W."/>
            <person name="Zody M.C."/>
            <person name="Goldstein S."/>
            <person name="She X."/>
            <person name="Bult C.J."/>
            <person name="Agarwala R."/>
            <person name="Cherry J.L."/>
            <person name="DiCuccio M."/>
            <person name="Hlavina W."/>
            <person name="Kapustin Y."/>
            <person name="Meric P."/>
            <person name="Maglott D."/>
            <person name="Birtle Z."/>
            <person name="Marques A.C."/>
            <person name="Graves T."/>
            <person name="Zhou S."/>
            <person name="Teague B."/>
            <person name="Potamousis K."/>
            <person name="Churas C."/>
            <person name="Place M."/>
            <person name="Herschleb J."/>
            <person name="Runnheim R."/>
            <person name="Forrest D."/>
            <person name="Amos-Landgraf J."/>
            <person name="Schwartz D.C."/>
            <person name="Cheng Z."/>
            <person name="Lindblad-Toh K."/>
            <person name="Eichler E.E."/>
            <person name="Ponting C.P."/>
        </authorList>
    </citation>
    <scope>NUCLEOTIDE SEQUENCE [LARGE SCALE GENOMIC DNA]</scope>
    <source>
        <strain>C57BL/6J</strain>
    </source>
</reference>
<reference key="2">
    <citation type="journal article" date="2004" name="Genome Res.">
        <title>The status, quality, and expansion of the NIH full-length cDNA project: the Mammalian Gene Collection (MGC).</title>
        <authorList>
            <consortium name="The MGC Project Team"/>
        </authorList>
    </citation>
    <scope>NUCLEOTIDE SEQUENCE [LARGE SCALE MRNA] (ISOFORM 1)</scope>
    <scope>NUCLEOTIDE SEQUENCE [LARGE SCALE MRNA] OF 268-626 (ISOFORM 2)</scope>
    <source>
        <strain>129</strain>
        <tissue>Brain</tissue>
        <tissue>Mammary gland</tissue>
    </source>
</reference>
<accession>Q5F259</accession>
<accession>B9EKW8</accession>
<accession>Q6IR40</accession>
<feature type="chain" id="PRO_0000240644" description="Ankyrin repeat domain-containing protein 13B">
    <location>
        <begin position="1"/>
        <end position="626"/>
    </location>
</feature>
<feature type="repeat" description="ANK 1">
    <location>
        <begin position="47"/>
        <end position="76"/>
    </location>
</feature>
<feature type="repeat" description="ANK 2">
    <location>
        <begin position="80"/>
        <end position="109"/>
    </location>
</feature>
<feature type="domain" description="UIM 1" evidence="3">
    <location>
        <begin position="503"/>
        <end position="522"/>
    </location>
</feature>
<feature type="domain" description="UIM 2" evidence="3">
    <location>
        <begin position="585"/>
        <end position="604"/>
    </location>
</feature>
<feature type="domain" description="UIM 3" evidence="3">
    <location>
        <begin position="610"/>
        <end position="626"/>
    </location>
</feature>
<feature type="region of interest" description="Disordered" evidence="4">
    <location>
        <begin position="442"/>
        <end position="470"/>
    </location>
</feature>
<feature type="region of interest" description="Disordered" evidence="4">
    <location>
        <begin position="534"/>
        <end position="614"/>
    </location>
</feature>
<feature type="compositionally biased region" description="Low complexity" evidence="4">
    <location>
        <begin position="448"/>
        <end position="470"/>
    </location>
</feature>
<feature type="compositionally biased region" description="Pro residues" evidence="4">
    <location>
        <begin position="554"/>
        <end position="575"/>
    </location>
</feature>
<feature type="modified residue" description="N-acetylmethionine" evidence="2">
    <location>
        <position position="1"/>
    </location>
</feature>
<feature type="splice variant" id="VSP_019405" description="In isoform 2." evidence="5">
    <original>SAPPTPQRQPMPPAPVPSPRPSPGPGSSSHVFRSYDEQLRLAMELSAQEQEERRRRVRQEEEELERILRLSLTEQ</original>
    <variation>PREPSVPSTPGIENPLSRWLLPTPFPGTGRVASAPGMCRDQGPSSLDLQTLNNRQVSQVCRERGALDKSSPPPGAPHPRRSASPCPRLQCPALGPAQVPAPAAMCSGATTSSCGWLWSCPLRSRRRGGGECARRRKSWSGSCGSR</variation>
    <location>
        <begin position="552"/>
        <end position="626"/>
    </location>
</feature>
<organism>
    <name type="scientific">Mus musculus</name>
    <name type="common">Mouse</name>
    <dbReference type="NCBI Taxonomy" id="10090"/>
    <lineage>
        <taxon>Eukaryota</taxon>
        <taxon>Metazoa</taxon>
        <taxon>Chordata</taxon>
        <taxon>Craniata</taxon>
        <taxon>Vertebrata</taxon>
        <taxon>Euteleostomi</taxon>
        <taxon>Mammalia</taxon>
        <taxon>Eutheria</taxon>
        <taxon>Euarchontoglires</taxon>
        <taxon>Glires</taxon>
        <taxon>Rodentia</taxon>
        <taxon>Myomorpha</taxon>
        <taxon>Muroidea</taxon>
        <taxon>Muridae</taxon>
        <taxon>Murinae</taxon>
        <taxon>Mus</taxon>
        <taxon>Mus</taxon>
    </lineage>
</organism>
<name>AN13B_MOUSE</name>
<evidence type="ECO:0000250" key="1"/>
<evidence type="ECO:0000250" key="2">
    <source>
        <dbReference type="UniProtKB" id="Q86YJ7"/>
    </source>
</evidence>
<evidence type="ECO:0000255" key="3">
    <source>
        <dbReference type="PROSITE-ProRule" id="PRU00213"/>
    </source>
</evidence>
<evidence type="ECO:0000256" key="4">
    <source>
        <dbReference type="SAM" id="MobiDB-lite"/>
    </source>
</evidence>
<evidence type="ECO:0000303" key="5">
    <source>
    </source>
</evidence>
<keyword id="KW-0007">Acetylation</keyword>
<keyword id="KW-0025">Alternative splicing</keyword>
<keyword id="KW-0040">ANK repeat</keyword>
<keyword id="KW-1003">Cell membrane</keyword>
<keyword id="KW-0967">Endosome</keyword>
<keyword id="KW-0472">Membrane</keyword>
<keyword id="KW-1185">Reference proteome</keyword>
<keyword id="KW-0677">Repeat</keyword>